<comment type="function">
    <text evidence="1">Dual function regulator of gene expression; regulator of transcription and modulator of alternative splicing. General coactivator of nuclear receptor-induced gene expression.</text>
</comment>
<comment type="subcellular location">
    <subcellularLocation>
        <location evidence="1">Nucleus</location>
    </subcellularLocation>
    <subcellularLocation>
        <location evidence="1">Nucleus speckle</location>
    </subcellularLocation>
    <subcellularLocation>
        <location evidence="1">Chromosome</location>
    </subcellularLocation>
</comment>
<comment type="domain">
    <text evidence="1">The N-terminal region can bind RNA; preferentially binds 5'-CGG[AG]GG-3' motifs.</text>
</comment>
<comment type="domain">
    <text evidence="1">The non-classical LXXLL motifs are not required for nuclear receptor coactivator activity.</text>
</comment>
<comment type="domain">
    <text evidence="1">The C-terminal region is necessary and sufficient for regulation of transcription and nuclear receptor coactivator activity. The C-terminal region is not required for RNA binding.</text>
</comment>
<comment type="similarity">
    <text evidence="3">Belongs to the ARGLU1 family.</text>
</comment>
<organism evidence="4">
    <name type="scientific">Gallus gallus</name>
    <name type="common">Chicken</name>
    <dbReference type="NCBI Taxonomy" id="9031"/>
    <lineage>
        <taxon>Eukaryota</taxon>
        <taxon>Metazoa</taxon>
        <taxon>Chordata</taxon>
        <taxon>Craniata</taxon>
        <taxon>Vertebrata</taxon>
        <taxon>Euteleostomi</taxon>
        <taxon>Archelosauria</taxon>
        <taxon>Archosauria</taxon>
        <taxon>Dinosauria</taxon>
        <taxon>Saurischia</taxon>
        <taxon>Theropoda</taxon>
        <taxon>Coelurosauria</taxon>
        <taxon>Aves</taxon>
        <taxon>Neognathae</taxon>
        <taxon>Galloanserae</taxon>
        <taxon>Galliformes</taxon>
        <taxon>Phasianidae</taxon>
        <taxon>Phasianinae</taxon>
        <taxon>Gallus</taxon>
    </lineage>
</organism>
<reference key="1">
    <citation type="journal article" date="2005" name="Genome Biol.">
        <title>Full-length cDNAs from chicken bursal lymphocytes to facilitate gene function analysis.</title>
        <authorList>
            <person name="Caldwell R.B."/>
            <person name="Kierzek A.M."/>
            <person name="Arakawa H."/>
            <person name="Bezzubov Y."/>
            <person name="Zaim J."/>
            <person name="Fiedler P."/>
            <person name="Kutter S."/>
            <person name="Blagodatski A."/>
            <person name="Kostovska D."/>
            <person name="Koter M."/>
            <person name="Plachy J."/>
            <person name="Carninci P."/>
            <person name="Hayashizaki Y."/>
            <person name="Buerstedde J.-M."/>
        </authorList>
    </citation>
    <scope>NUCLEOTIDE SEQUENCE [LARGE SCALE MRNA]</scope>
    <source>
        <strain>CB</strain>
        <tissue>Bursa of Fabricius</tissue>
    </source>
</reference>
<name>ARGL1_CHICK</name>
<dbReference type="EMBL" id="AJ719899">
    <property type="protein sequence ID" value="CAG31558.1"/>
    <property type="molecule type" value="mRNA"/>
</dbReference>
<dbReference type="RefSeq" id="NP_001006267.1">
    <property type="nucleotide sequence ID" value="NM_001006267.2"/>
</dbReference>
<dbReference type="SMR" id="Q5ZL35"/>
<dbReference type="FunCoup" id="Q5ZL35">
    <property type="interactions" value="2095"/>
</dbReference>
<dbReference type="STRING" id="9031.ENSGALP00000027180"/>
<dbReference type="PaxDb" id="9031-ENSGALP00000027180"/>
<dbReference type="Ensembl" id="ENSGALT00010036110.1">
    <property type="protein sequence ID" value="ENSGALP00010020974.1"/>
    <property type="gene ID" value="ENSGALG00010015016.1"/>
</dbReference>
<dbReference type="GeneID" id="418765"/>
<dbReference type="KEGG" id="gga:418765"/>
<dbReference type="CTD" id="55082"/>
<dbReference type="VEuPathDB" id="HostDB:geneid_418765"/>
<dbReference type="eggNOG" id="ENOG502QPR5">
    <property type="taxonomic scope" value="Eukaryota"/>
</dbReference>
<dbReference type="GeneTree" id="ENSGT00730000111249"/>
<dbReference type="HOGENOM" id="CLU_076749_0_0_1"/>
<dbReference type="InParanoid" id="Q5ZL35"/>
<dbReference type="OMA" id="VNSHGRH"/>
<dbReference type="PhylomeDB" id="Q5ZL35"/>
<dbReference type="TreeFam" id="TF324123"/>
<dbReference type="PRO" id="PR:Q5ZL35"/>
<dbReference type="Proteomes" id="UP000000539">
    <property type="component" value="Chromosome 1"/>
</dbReference>
<dbReference type="Bgee" id="ENSGALG00000016855">
    <property type="expression patterns" value="Expressed in ovary and 13 other cell types or tissues"/>
</dbReference>
<dbReference type="GO" id="GO:0005694">
    <property type="term" value="C:chromosome"/>
    <property type="evidence" value="ECO:0007669"/>
    <property type="project" value="UniProtKB-SubCell"/>
</dbReference>
<dbReference type="GO" id="GO:0005829">
    <property type="term" value="C:cytosol"/>
    <property type="evidence" value="ECO:0007669"/>
    <property type="project" value="Ensembl"/>
</dbReference>
<dbReference type="GO" id="GO:0005739">
    <property type="term" value="C:mitochondrion"/>
    <property type="evidence" value="ECO:0000318"/>
    <property type="project" value="GO_Central"/>
</dbReference>
<dbReference type="GO" id="GO:0016607">
    <property type="term" value="C:nuclear speck"/>
    <property type="evidence" value="ECO:0000250"/>
    <property type="project" value="UniProtKB"/>
</dbReference>
<dbReference type="GO" id="GO:0005654">
    <property type="term" value="C:nucleoplasm"/>
    <property type="evidence" value="ECO:0000318"/>
    <property type="project" value="GO_Central"/>
</dbReference>
<dbReference type="GO" id="GO:0036002">
    <property type="term" value="F:pre-mRNA binding"/>
    <property type="evidence" value="ECO:0000250"/>
    <property type="project" value="UniProtKB"/>
</dbReference>
<dbReference type="GO" id="GO:0003713">
    <property type="term" value="F:transcription coactivator activity"/>
    <property type="evidence" value="ECO:0000250"/>
    <property type="project" value="UniProtKB"/>
</dbReference>
<dbReference type="GO" id="GO:0006397">
    <property type="term" value="P:mRNA processing"/>
    <property type="evidence" value="ECO:0007669"/>
    <property type="project" value="UniProtKB-KW"/>
</dbReference>
<dbReference type="GO" id="GO:0000381">
    <property type="term" value="P:regulation of alternative mRNA splicing, via spliceosome"/>
    <property type="evidence" value="ECO:0000250"/>
    <property type="project" value="UniProtKB"/>
</dbReference>
<dbReference type="GO" id="GO:0008380">
    <property type="term" value="P:RNA splicing"/>
    <property type="evidence" value="ECO:0007669"/>
    <property type="project" value="UniProtKB-KW"/>
</dbReference>
<dbReference type="InterPro" id="IPR033371">
    <property type="entry name" value="ARGLU1"/>
</dbReference>
<dbReference type="PANTHER" id="PTHR31711">
    <property type="entry name" value="ARGININE AND GLUTAMATE-RICH PROTEIN 1"/>
    <property type="match status" value="1"/>
</dbReference>
<dbReference type="PANTHER" id="PTHR31711:SF1">
    <property type="entry name" value="ARGININE AND GLUTAMATE-RICH PROTEIN 1"/>
    <property type="match status" value="1"/>
</dbReference>
<dbReference type="Pfam" id="PF15346">
    <property type="entry name" value="ARGLU"/>
    <property type="match status" value="1"/>
</dbReference>
<accession>Q5ZL35</accession>
<evidence type="ECO:0000250" key="1">
    <source>
        <dbReference type="UniProtKB" id="Q9NWB6"/>
    </source>
</evidence>
<evidence type="ECO:0000256" key="2">
    <source>
        <dbReference type="SAM" id="MobiDB-lite"/>
    </source>
</evidence>
<evidence type="ECO:0000305" key="3"/>
<evidence type="ECO:0000312" key="4">
    <source>
        <dbReference type="Proteomes" id="UP000000539"/>
    </source>
</evidence>
<feature type="chain" id="PRO_0000288441" description="Arginine and glutamate-rich protein 1">
    <location>
        <begin position="1"/>
        <end position="276"/>
    </location>
</feature>
<feature type="region of interest" description="Disordered" evidence="2">
    <location>
        <begin position="1"/>
        <end position="117"/>
    </location>
</feature>
<feature type="region of interest" description="Necessary and sufficient for RNA binding" evidence="1">
    <location>
        <begin position="1"/>
        <end position="77"/>
    </location>
</feature>
<feature type="region of interest" description="Necessary and sufficient for transcriptional regulation" evidence="1">
    <location>
        <begin position="78"/>
        <end position="276"/>
    </location>
</feature>
<feature type="region of interest" description="Disordered" evidence="2">
    <location>
        <begin position="240"/>
        <end position="276"/>
    </location>
</feature>
<feature type="short sequence motif" description="LXXLL motif 1; degenerate" evidence="1">
    <location>
        <begin position="175"/>
        <end position="179"/>
    </location>
</feature>
<feature type="short sequence motif" description="LXXLL motif 2; degenerate" evidence="1">
    <location>
        <begin position="204"/>
        <end position="208"/>
    </location>
</feature>
<feature type="compositionally biased region" description="Basic residues" evidence="2">
    <location>
        <begin position="1"/>
        <end position="30"/>
    </location>
</feature>
<feature type="compositionally biased region" description="Basic residues" evidence="2">
    <location>
        <begin position="38"/>
        <end position="59"/>
    </location>
</feature>
<feature type="compositionally biased region" description="Basic and acidic residues" evidence="2">
    <location>
        <begin position="67"/>
        <end position="87"/>
    </location>
</feature>
<feature type="compositionally biased region" description="Basic and acidic residues" evidence="2">
    <location>
        <begin position="96"/>
        <end position="117"/>
    </location>
</feature>
<feature type="compositionally biased region" description="Basic and acidic residues" evidence="2">
    <location>
        <begin position="240"/>
        <end position="256"/>
    </location>
</feature>
<protein>
    <recommendedName>
        <fullName>Arginine and glutamate-rich protein 1</fullName>
    </recommendedName>
</protein>
<gene>
    <name type="primary">ARGLU1</name>
    <name type="ORF">RCJMB04_7p10</name>
</gene>
<keyword id="KW-0158">Chromosome</keyword>
<keyword id="KW-0507">mRNA processing</keyword>
<keyword id="KW-0508">mRNA splicing</keyword>
<keyword id="KW-0539">Nucleus</keyword>
<keyword id="KW-1185">Reference proteome</keyword>
<keyword id="KW-0694">RNA-binding</keyword>
<proteinExistence type="evidence at transcript level"/>
<sequence length="276" mass="33544">MGRSRSRSSSRSKHTKSSKHNKKNRSRSRSRSREKERARKRSKSRESKRNRRRESRSRSRSNTAPSSRRDRERERERASSPPDRIDIFGRTVSKRSSLDEKQKREEEEKKAEFERQRKIRQQEIEEKLIEEETARRVEELVAKRVEEELEKRKDEIEREVLRRVEEAKRIMEKQLLEELERQRQAELAAQKAREEEERAKREELERILEENNRKIAEAQAKLAEEQLKIVEEQRKIHEERMKLEQERQRQQKEEQKIILGKGKSRPKLSFSLKSQD</sequence>